<reference key="1">
    <citation type="submission" date="2009-01" db="EMBL/GenBank/DDBJ databases">
        <title>Complete sequence of Desulfovibrio desulfuricans subsp. desulfuricans str. ATCC 27774.</title>
        <authorList>
            <consortium name="US DOE Joint Genome Institute"/>
            <person name="Lucas S."/>
            <person name="Copeland A."/>
            <person name="Lapidus A."/>
            <person name="Glavina del Rio T."/>
            <person name="Tice H."/>
            <person name="Bruce D."/>
            <person name="Goodwin L."/>
            <person name="Pitluck S."/>
            <person name="Sims D."/>
            <person name="Lu M."/>
            <person name="Kiss H."/>
            <person name="Meineke L."/>
            <person name="Brettin T."/>
            <person name="Detter J.C."/>
            <person name="Han C."/>
            <person name="Larimer F."/>
            <person name="Land M."/>
            <person name="Hauser L."/>
            <person name="Kyrpides N."/>
            <person name="Ovchinnikova G."/>
            <person name="Hazen T.C."/>
        </authorList>
    </citation>
    <scope>NUCLEOTIDE SEQUENCE [LARGE SCALE GENOMIC DNA]</scope>
    <source>
        <strain>ATCC 27774 / DSM 6949 / MB</strain>
    </source>
</reference>
<sequence length="323" mass="34569">MPSNSIFGGAAQAAPPSEALPVICLAGPTGSGKTAAALAVAEALGGEVINADSRQVYADFPRITAQPSAEELACCPHHLYGFLPTAQKISAGRWAAQAQATARQILSRGKIPLLVGGTGLYFQTLLHGTAEIPPVDPALTAAFTARLEDVGSQAMHAELARVDPDYATRIHPNDRQRIVRALEVHAATGKPFTWWHKHAMSRPPCNGPLLVLDAPLPWLEPRLARRLDMMLESGAMDEAAAALKNCDDDDAPGWTGIGCAEALAFLRGRLGFDACRDLWLRNTRAYAKRQLTWFRARPEAVWLPPDNVDAVVKAAGVRLPAGV</sequence>
<feature type="chain" id="PRO_0000377146" description="tRNA dimethylallyltransferase">
    <location>
        <begin position="1"/>
        <end position="323"/>
    </location>
</feature>
<feature type="region of interest" description="Interaction with substrate tRNA" evidence="1">
    <location>
        <begin position="52"/>
        <end position="55"/>
    </location>
</feature>
<feature type="region of interest" description="Interaction with substrate tRNA" evidence="1">
    <location>
        <begin position="176"/>
        <end position="180"/>
    </location>
</feature>
<feature type="binding site" evidence="1">
    <location>
        <begin position="27"/>
        <end position="34"/>
    </location>
    <ligand>
        <name>ATP</name>
        <dbReference type="ChEBI" id="CHEBI:30616"/>
    </ligand>
</feature>
<feature type="binding site" evidence="1">
    <location>
        <begin position="29"/>
        <end position="34"/>
    </location>
    <ligand>
        <name>substrate</name>
    </ligand>
</feature>
<feature type="site" description="Interaction with substrate tRNA" evidence="1">
    <location>
        <position position="118"/>
    </location>
</feature>
<protein>
    <recommendedName>
        <fullName evidence="1">tRNA dimethylallyltransferase</fullName>
        <ecNumber evidence="1">2.5.1.75</ecNumber>
    </recommendedName>
    <alternativeName>
        <fullName evidence="1">Dimethylallyl diphosphate:tRNA dimethylallyltransferase</fullName>
        <shortName evidence="1">DMAPP:tRNA dimethylallyltransferase</shortName>
        <shortName evidence="1">DMATase</shortName>
    </alternativeName>
    <alternativeName>
        <fullName evidence="1">Isopentenyl-diphosphate:tRNA isopentenyltransferase</fullName>
        <shortName evidence="1">IPP transferase</shortName>
        <shortName evidence="1">IPPT</shortName>
        <shortName evidence="1">IPTase</shortName>
    </alternativeName>
</protein>
<organism>
    <name type="scientific">Desulfovibrio desulfuricans (strain ATCC 27774 / DSM 6949 / MB)</name>
    <dbReference type="NCBI Taxonomy" id="525146"/>
    <lineage>
        <taxon>Bacteria</taxon>
        <taxon>Pseudomonadati</taxon>
        <taxon>Thermodesulfobacteriota</taxon>
        <taxon>Desulfovibrionia</taxon>
        <taxon>Desulfovibrionales</taxon>
        <taxon>Desulfovibrionaceae</taxon>
        <taxon>Desulfovibrio</taxon>
    </lineage>
</organism>
<gene>
    <name evidence="1" type="primary">miaA</name>
    <name type="ordered locus">Ddes_2036</name>
</gene>
<comment type="function">
    <text evidence="1">Catalyzes the transfer of a dimethylallyl group onto the adenine at position 37 in tRNAs that read codons beginning with uridine, leading to the formation of N6-(dimethylallyl)adenosine (i(6)A).</text>
</comment>
<comment type="catalytic activity">
    <reaction evidence="1">
        <text>adenosine(37) in tRNA + dimethylallyl diphosphate = N(6)-dimethylallyladenosine(37) in tRNA + diphosphate</text>
        <dbReference type="Rhea" id="RHEA:26482"/>
        <dbReference type="Rhea" id="RHEA-COMP:10162"/>
        <dbReference type="Rhea" id="RHEA-COMP:10375"/>
        <dbReference type="ChEBI" id="CHEBI:33019"/>
        <dbReference type="ChEBI" id="CHEBI:57623"/>
        <dbReference type="ChEBI" id="CHEBI:74411"/>
        <dbReference type="ChEBI" id="CHEBI:74415"/>
        <dbReference type="EC" id="2.5.1.75"/>
    </reaction>
</comment>
<comment type="cofactor">
    <cofactor evidence="1">
        <name>Mg(2+)</name>
        <dbReference type="ChEBI" id="CHEBI:18420"/>
    </cofactor>
</comment>
<comment type="subunit">
    <text evidence="1">Monomer.</text>
</comment>
<comment type="similarity">
    <text evidence="1">Belongs to the IPP transferase family.</text>
</comment>
<evidence type="ECO:0000255" key="1">
    <source>
        <dbReference type="HAMAP-Rule" id="MF_00185"/>
    </source>
</evidence>
<keyword id="KW-0067">ATP-binding</keyword>
<keyword id="KW-0460">Magnesium</keyword>
<keyword id="KW-0547">Nucleotide-binding</keyword>
<keyword id="KW-0808">Transferase</keyword>
<keyword id="KW-0819">tRNA processing</keyword>
<accession>B8J3C2</accession>
<proteinExistence type="inferred from homology"/>
<dbReference type="EC" id="2.5.1.75" evidence="1"/>
<dbReference type="EMBL" id="CP001358">
    <property type="protein sequence ID" value="ACL49932.1"/>
    <property type="molecule type" value="Genomic_DNA"/>
</dbReference>
<dbReference type="SMR" id="B8J3C2"/>
<dbReference type="STRING" id="525146.Ddes_2036"/>
<dbReference type="KEGG" id="dds:Ddes_2036"/>
<dbReference type="eggNOG" id="COG0324">
    <property type="taxonomic scope" value="Bacteria"/>
</dbReference>
<dbReference type="HOGENOM" id="CLU_032616_0_1_7"/>
<dbReference type="GO" id="GO:0005524">
    <property type="term" value="F:ATP binding"/>
    <property type="evidence" value="ECO:0007669"/>
    <property type="project" value="UniProtKB-UniRule"/>
</dbReference>
<dbReference type="GO" id="GO:0052381">
    <property type="term" value="F:tRNA dimethylallyltransferase activity"/>
    <property type="evidence" value="ECO:0007669"/>
    <property type="project" value="UniProtKB-UniRule"/>
</dbReference>
<dbReference type="GO" id="GO:0006400">
    <property type="term" value="P:tRNA modification"/>
    <property type="evidence" value="ECO:0007669"/>
    <property type="project" value="TreeGrafter"/>
</dbReference>
<dbReference type="FunFam" id="1.10.20.140:FF:000001">
    <property type="entry name" value="tRNA dimethylallyltransferase"/>
    <property type="match status" value="1"/>
</dbReference>
<dbReference type="Gene3D" id="1.10.20.140">
    <property type="match status" value="1"/>
</dbReference>
<dbReference type="Gene3D" id="3.40.50.300">
    <property type="entry name" value="P-loop containing nucleotide triphosphate hydrolases"/>
    <property type="match status" value="1"/>
</dbReference>
<dbReference type="HAMAP" id="MF_00185">
    <property type="entry name" value="IPP_trans"/>
    <property type="match status" value="1"/>
</dbReference>
<dbReference type="InterPro" id="IPR039657">
    <property type="entry name" value="Dimethylallyltransferase"/>
</dbReference>
<dbReference type="InterPro" id="IPR018022">
    <property type="entry name" value="IPT"/>
</dbReference>
<dbReference type="InterPro" id="IPR027417">
    <property type="entry name" value="P-loop_NTPase"/>
</dbReference>
<dbReference type="NCBIfam" id="TIGR00174">
    <property type="entry name" value="miaA"/>
    <property type="match status" value="1"/>
</dbReference>
<dbReference type="PANTHER" id="PTHR11088">
    <property type="entry name" value="TRNA DIMETHYLALLYLTRANSFERASE"/>
    <property type="match status" value="1"/>
</dbReference>
<dbReference type="PANTHER" id="PTHR11088:SF60">
    <property type="entry name" value="TRNA DIMETHYLALLYLTRANSFERASE"/>
    <property type="match status" value="1"/>
</dbReference>
<dbReference type="Pfam" id="PF01715">
    <property type="entry name" value="IPPT"/>
    <property type="match status" value="1"/>
</dbReference>
<dbReference type="SUPFAM" id="SSF52540">
    <property type="entry name" value="P-loop containing nucleoside triphosphate hydrolases"/>
    <property type="match status" value="2"/>
</dbReference>
<name>MIAA_DESDA</name>